<feature type="chain" id="PRO_0000131275" description="Large ribosomal subunit protein uL18">
    <location>
        <begin position="1"/>
        <end position="118"/>
    </location>
</feature>
<sequence>MNAKALYKKKALRDRRKLRIKSKLLGDKLRPRVSVFRSNRYFYAQAIDDVKQSTITHIDGRKMGFKNTQEDAKKLGALFAEELKKAGIERAVYDRNGYLYHGVVAAFAESLRENGIVL</sequence>
<keyword id="KW-0687">Ribonucleoprotein</keyword>
<keyword id="KW-0689">Ribosomal protein</keyword>
<keyword id="KW-0694">RNA-binding</keyword>
<keyword id="KW-0699">rRNA-binding</keyword>
<accession>Q9ZJS7</accession>
<comment type="function">
    <text evidence="1">This is one of the proteins that bind and probably mediate the attachment of the 5S RNA into the large ribosomal subunit, where it forms part of the central protuberance.</text>
</comment>
<comment type="subunit">
    <text evidence="1">Part of the 50S ribosomal subunit; part of the 5S rRNA/L5/L18/L25 subcomplex. Contacts the 5S and 23S rRNAs.</text>
</comment>
<comment type="similarity">
    <text evidence="1">Belongs to the universal ribosomal protein uL18 family.</text>
</comment>
<gene>
    <name evidence="1" type="primary">rplR</name>
    <name type="ordered locus">jhp_1223</name>
</gene>
<dbReference type="EMBL" id="AE001439">
    <property type="protein sequence ID" value="AAD06807.1"/>
    <property type="molecule type" value="Genomic_DNA"/>
</dbReference>
<dbReference type="PIR" id="G71833">
    <property type="entry name" value="G71833"/>
</dbReference>
<dbReference type="RefSeq" id="WP_000991866.1">
    <property type="nucleotide sequence ID" value="NC_000921.1"/>
</dbReference>
<dbReference type="SMR" id="Q9ZJS7"/>
<dbReference type="KEGG" id="hpj:jhp_1223"/>
<dbReference type="PATRIC" id="fig|85963.30.peg.1348"/>
<dbReference type="eggNOG" id="COG0256">
    <property type="taxonomic scope" value="Bacteria"/>
</dbReference>
<dbReference type="Proteomes" id="UP000000804">
    <property type="component" value="Chromosome"/>
</dbReference>
<dbReference type="GO" id="GO:0022625">
    <property type="term" value="C:cytosolic large ribosomal subunit"/>
    <property type="evidence" value="ECO:0007669"/>
    <property type="project" value="TreeGrafter"/>
</dbReference>
<dbReference type="GO" id="GO:0008097">
    <property type="term" value="F:5S rRNA binding"/>
    <property type="evidence" value="ECO:0007669"/>
    <property type="project" value="TreeGrafter"/>
</dbReference>
<dbReference type="GO" id="GO:0003735">
    <property type="term" value="F:structural constituent of ribosome"/>
    <property type="evidence" value="ECO:0007669"/>
    <property type="project" value="InterPro"/>
</dbReference>
<dbReference type="GO" id="GO:0006412">
    <property type="term" value="P:translation"/>
    <property type="evidence" value="ECO:0007669"/>
    <property type="project" value="UniProtKB-UniRule"/>
</dbReference>
<dbReference type="CDD" id="cd00432">
    <property type="entry name" value="Ribosomal_L18_L5e"/>
    <property type="match status" value="1"/>
</dbReference>
<dbReference type="Gene3D" id="3.30.420.100">
    <property type="match status" value="1"/>
</dbReference>
<dbReference type="HAMAP" id="MF_01337_B">
    <property type="entry name" value="Ribosomal_uL18_B"/>
    <property type="match status" value="1"/>
</dbReference>
<dbReference type="InterPro" id="IPR004389">
    <property type="entry name" value="Ribosomal_uL18_bac-type"/>
</dbReference>
<dbReference type="InterPro" id="IPR005484">
    <property type="entry name" value="Ribosomal_uL18_bac/euk"/>
</dbReference>
<dbReference type="NCBIfam" id="TIGR00060">
    <property type="entry name" value="L18_bact"/>
    <property type="match status" value="1"/>
</dbReference>
<dbReference type="PANTHER" id="PTHR12899">
    <property type="entry name" value="39S RIBOSOMAL PROTEIN L18, MITOCHONDRIAL"/>
    <property type="match status" value="1"/>
</dbReference>
<dbReference type="PANTHER" id="PTHR12899:SF3">
    <property type="entry name" value="LARGE RIBOSOMAL SUBUNIT PROTEIN UL18M"/>
    <property type="match status" value="1"/>
</dbReference>
<dbReference type="Pfam" id="PF00861">
    <property type="entry name" value="Ribosomal_L18p"/>
    <property type="match status" value="1"/>
</dbReference>
<dbReference type="SUPFAM" id="SSF53137">
    <property type="entry name" value="Translational machinery components"/>
    <property type="match status" value="1"/>
</dbReference>
<name>RL18_HELPJ</name>
<organism>
    <name type="scientific">Helicobacter pylori (strain J99 / ATCC 700824)</name>
    <name type="common">Campylobacter pylori J99</name>
    <dbReference type="NCBI Taxonomy" id="85963"/>
    <lineage>
        <taxon>Bacteria</taxon>
        <taxon>Pseudomonadati</taxon>
        <taxon>Campylobacterota</taxon>
        <taxon>Epsilonproteobacteria</taxon>
        <taxon>Campylobacterales</taxon>
        <taxon>Helicobacteraceae</taxon>
        <taxon>Helicobacter</taxon>
    </lineage>
</organism>
<reference key="1">
    <citation type="journal article" date="1999" name="Nature">
        <title>Genomic sequence comparison of two unrelated isolates of the human gastric pathogen Helicobacter pylori.</title>
        <authorList>
            <person name="Alm R.A."/>
            <person name="Ling L.-S.L."/>
            <person name="Moir D.T."/>
            <person name="King B.L."/>
            <person name="Brown E.D."/>
            <person name="Doig P.C."/>
            <person name="Smith D.R."/>
            <person name="Noonan B."/>
            <person name="Guild B.C."/>
            <person name="deJonge B.L."/>
            <person name="Carmel G."/>
            <person name="Tummino P.J."/>
            <person name="Caruso A."/>
            <person name="Uria-Nickelsen M."/>
            <person name="Mills D.M."/>
            <person name="Ives C."/>
            <person name="Gibson R."/>
            <person name="Merberg D."/>
            <person name="Mills S.D."/>
            <person name="Jiang Q."/>
            <person name="Taylor D.E."/>
            <person name="Vovis G.F."/>
            <person name="Trust T.J."/>
        </authorList>
    </citation>
    <scope>NUCLEOTIDE SEQUENCE [LARGE SCALE GENOMIC DNA]</scope>
    <source>
        <strain>J99 / ATCC 700824</strain>
    </source>
</reference>
<proteinExistence type="inferred from homology"/>
<evidence type="ECO:0000255" key="1">
    <source>
        <dbReference type="HAMAP-Rule" id="MF_01337"/>
    </source>
</evidence>
<evidence type="ECO:0000305" key="2"/>
<protein>
    <recommendedName>
        <fullName evidence="1">Large ribosomal subunit protein uL18</fullName>
    </recommendedName>
    <alternativeName>
        <fullName evidence="2">50S ribosomal protein L18</fullName>
    </alternativeName>
</protein>